<name>DDL_XYLFT</name>
<protein>
    <recommendedName>
        <fullName evidence="2">D-alanine--D-alanine ligase</fullName>
        <ecNumber evidence="2">6.3.2.4</ecNumber>
    </recommendedName>
    <alternativeName>
        <fullName evidence="2">D-Ala-D-Ala ligase</fullName>
    </alternativeName>
    <alternativeName>
        <fullName evidence="2">D-alanylalanine synthetase</fullName>
    </alternativeName>
</protein>
<sequence>MFGRVAVLLGGTSAEREVSLLSGRNVLEVLRMRGVDAQSVDGVPALAQALVERRFDRVFNVLHGHNGGGEDGVVQGLMQAFGVPYTGSDVLGSALSMDKVRTKQVWLALGLPTPRYASLSVCATAVEVRKAVEMLGFPVIIKPAKEGSSVGVSRVFALEHLEEAVALAARYEGELLMEQLIEGDELTVSILDEMALPSIRIVPQGQWYDYNAKYLAEDTQYVCPGLDDVAEAEIAQLALAAFHSVGCRGWGRVDVMRERGSGRFFLLEVNTAPGMTTHSLVPKAASQLGMGFDDLVWRILEQTL</sequence>
<dbReference type="EC" id="6.3.2.4" evidence="2"/>
<dbReference type="EMBL" id="AE009442">
    <property type="protein sequence ID" value="AAO29696.1"/>
    <property type="molecule type" value="Genomic_DNA"/>
</dbReference>
<dbReference type="SMR" id="Q87AG1"/>
<dbReference type="KEGG" id="xft:PD_1864"/>
<dbReference type="HOGENOM" id="CLU_039268_1_2_6"/>
<dbReference type="UniPathway" id="UPA00219"/>
<dbReference type="Proteomes" id="UP000002516">
    <property type="component" value="Chromosome"/>
</dbReference>
<dbReference type="GO" id="GO:0005829">
    <property type="term" value="C:cytosol"/>
    <property type="evidence" value="ECO:0007669"/>
    <property type="project" value="TreeGrafter"/>
</dbReference>
<dbReference type="GO" id="GO:0005524">
    <property type="term" value="F:ATP binding"/>
    <property type="evidence" value="ECO:0007669"/>
    <property type="project" value="UniProtKB-KW"/>
</dbReference>
<dbReference type="GO" id="GO:0008716">
    <property type="term" value="F:D-alanine-D-alanine ligase activity"/>
    <property type="evidence" value="ECO:0007669"/>
    <property type="project" value="UniProtKB-UniRule"/>
</dbReference>
<dbReference type="GO" id="GO:0046872">
    <property type="term" value="F:metal ion binding"/>
    <property type="evidence" value="ECO:0007669"/>
    <property type="project" value="UniProtKB-KW"/>
</dbReference>
<dbReference type="GO" id="GO:0071555">
    <property type="term" value="P:cell wall organization"/>
    <property type="evidence" value="ECO:0007669"/>
    <property type="project" value="UniProtKB-KW"/>
</dbReference>
<dbReference type="GO" id="GO:0009252">
    <property type="term" value="P:peptidoglycan biosynthetic process"/>
    <property type="evidence" value="ECO:0007669"/>
    <property type="project" value="UniProtKB-UniRule"/>
</dbReference>
<dbReference type="GO" id="GO:0008360">
    <property type="term" value="P:regulation of cell shape"/>
    <property type="evidence" value="ECO:0007669"/>
    <property type="project" value="UniProtKB-KW"/>
</dbReference>
<dbReference type="FunFam" id="3.30.470.20:FF:000008">
    <property type="entry name" value="D-alanine--D-alanine ligase"/>
    <property type="match status" value="1"/>
</dbReference>
<dbReference type="Gene3D" id="3.40.50.20">
    <property type="match status" value="1"/>
</dbReference>
<dbReference type="Gene3D" id="3.30.1490.20">
    <property type="entry name" value="ATP-grasp fold, A domain"/>
    <property type="match status" value="1"/>
</dbReference>
<dbReference type="Gene3D" id="3.30.470.20">
    <property type="entry name" value="ATP-grasp fold, B domain"/>
    <property type="match status" value="1"/>
</dbReference>
<dbReference type="HAMAP" id="MF_00047">
    <property type="entry name" value="Dala_Dala_lig"/>
    <property type="match status" value="1"/>
</dbReference>
<dbReference type="InterPro" id="IPR011761">
    <property type="entry name" value="ATP-grasp"/>
</dbReference>
<dbReference type="InterPro" id="IPR013815">
    <property type="entry name" value="ATP_grasp_subdomain_1"/>
</dbReference>
<dbReference type="InterPro" id="IPR000291">
    <property type="entry name" value="D-Ala_lig_Van_CS"/>
</dbReference>
<dbReference type="InterPro" id="IPR005905">
    <property type="entry name" value="D_ala_D_ala"/>
</dbReference>
<dbReference type="InterPro" id="IPR011095">
    <property type="entry name" value="Dala_Dala_lig_C"/>
</dbReference>
<dbReference type="InterPro" id="IPR011127">
    <property type="entry name" value="Dala_Dala_lig_N"/>
</dbReference>
<dbReference type="InterPro" id="IPR016185">
    <property type="entry name" value="PreATP-grasp_dom_sf"/>
</dbReference>
<dbReference type="NCBIfam" id="TIGR01205">
    <property type="entry name" value="D_ala_D_alaTIGR"/>
    <property type="match status" value="1"/>
</dbReference>
<dbReference type="NCBIfam" id="NF002378">
    <property type="entry name" value="PRK01372.1"/>
    <property type="match status" value="1"/>
</dbReference>
<dbReference type="PANTHER" id="PTHR23132">
    <property type="entry name" value="D-ALANINE--D-ALANINE LIGASE"/>
    <property type="match status" value="1"/>
</dbReference>
<dbReference type="PANTHER" id="PTHR23132:SF23">
    <property type="entry name" value="D-ALANINE--D-ALANINE LIGASE B"/>
    <property type="match status" value="1"/>
</dbReference>
<dbReference type="Pfam" id="PF07478">
    <property type="entry name" value="Dala_Dala_lig_C"/>
    <property type="match status" value="1"/>
</dbReference>
<dbReference type="Pfam" id="PF01820">
    <property type="entry name" value="Dala_Dala_lig_N"/>
    <property type="match status" value="1"/>
</dbReference>
<dbReference type="PIRSF" id="PIRSF039102">
    <property type="entry name" value="Ddl/VanB"/>
    <property type="match status" value="1"/>
</dbReference>
<dbReference type="SUPFAM" id="SSF56059">
    <property type="entry name" value="Glutathione synthetase ATP-binding domain-like"/>
    <property type="match status" value="1"/>
</dbReference>
<dbReference type="SUPFAM" id="SSF52440">
    <property type="entry name" value="PreATP-grasp domain"/>
    <property type="match status" value="1"/>
</dbReference>
<dbReference type="PROSITE" id="PS50975">
    <property type="entry name" value="ATP_GRASP"/>
    <property type="match status" value="1"/>
</dbReference>
<dbReference type="PROSITE" id="PS00843">
    <property type="entry name" value="DALA_DALA_LIGASE_1"/>
    <property type="match status" value="1"/>
</dbReference>
<dbReference type="PROSITE" id="PS00844">
    <property type="entry name" value="DALA_DALA_LIGASE_2"/>
    <property type="match status" value="1"/>
</dbReference>
<reference key="1">
    <citation type="journal article" date="2003" name="J. Bacteriol.">
        <title>Comparative analyses of the complete genome sequences of Pierce's disease and citrus variegated chlorosis strains of Xylella fastidiosa.</title>
        <authorList>
            <person name="Van Sluys M.A."/>
            <person name="de Oliveira M.C."/>
            <person name="Monteiro-Vitorello C.B."/>
            <person name="Miyaki C.Y."/>
            <person name="Furlan L.R."/>
            <person name="Camargo L.E.A."/>
            <person name="da Silva A.C.R."/>
            <person name="Moon D.H."/>
            <person name="Takita M.A."/>
            <person name="Lemos E.G.M."/>
            <person name="Machado M.A."/>
            <person name="Ferro M.I.T."/>
            <person name="da Silva F.R."/>
            <person name="Goldman M.H.S."/>
            <person name="Goldman G.H."/>
            <person name="Lemos M.V.F."/>
            <person name="El-Dorry H."/>
            <person name="Tsai S.M."/>
            <person name="Carrer H."/>
            <person name="Carraro D.M."/>
            <person name="de Oliveira R.C."/>
            <person name="Nunes L.R."/>
            <person name="Siqueira W.J."/>
            <person name="Coutinho L.L."/>
            <person name="Kimura E.T."/>
            <person name="Ferro E.S."/>
            <person name="Harakava R."/>
            <person name="Kuramae E.E."/>
            <person name="Marino C.L."/>
            <person name="Giglioti E."/>
            <person name="Abreu I.L."/>
            <person name="Alves L.M.C."/>
            <person name="do Amaral A.M."/>
            <person name="Baia G.S."/>
            <person name="Blanco S.R."/>
            <person name="Brito M.S."/>
            <person name="Cannavan F.S."/>
            <person name="Celestino A.V."/>
            <person name="da Cunha A.F."/>
            <person name="Fenille R.C."/>
            <person name="Ferro J.A."/>
            <person name="Formighieri E.F."/>
            <person name="Kishi L.T."/>
            <person name="Leoni S.G."/>
            <person name="Oliveira A.R."/>
            <person name="Rosa V.E. Jr."/>
            <person name="Sassaki F.T."/>
            <person name="Sena J.A.D."/>
            <person name="de Souza A.A."/>
            <person name="Truffi D."/>
            <person name="Tsukumo F."/>
            <person name="Yanai G.M."/>
            <person name="Zaros L.G."/>
            <person name="Civerolo E.L."/>
            <person name="Simpson A.J.G."/>
            <person name="Almeida N.F. Jr."/>
            <person name="Setubal J.C."/>
            <person name="Kitajima J.P."/>
        </authorList>
    </citation>
    <scope>NUCLEOTIDE SEQUENCE [LARGE SCALE GENOMIC DNA]</scope>
    <source>
        <strain>Temecula1 / ATCC 700964</strain>
    </source>
</reference>
<gene>
    <name evidence="2" type="primary">ddl</name>
    <name type="synonym">ddlB</name>
    <name type="ordered locus">PD_1864</name>
</gene>
<organism>
    <name type="scientific">Xylella fastidiosa (strain Temecula1 / ATCC 700964)</name>
    <dbReference type="NCBI Taxonomy" id="183190"/>
    <lineage>
        <taxon>Bacteria</taxon>
        <taxon>Pseudomonadati</taxon>
        <taxon>Pseudomonadota</taxon>
        <taxon>Gammaproteobacteria</taxon>
        <taxon>Lysobacterales</taxon>
        <taxon>Lysobacteraceae</taxon>
        <taxon>Xylella</taxon>
    </lineage>
</organism>
<proteinExistence type="inferred from homology"/>
<evidence type="ECO:0000250" key="1"/>
<evidence type="ECO:0000255" key="2">
    <source>
        <dbReference type="HAMAP-Rule" id="MF_00047"/>
    </source>
</evidence>
<keyword id="KW-0067">ATP-binding</keyword>
<keyword id="KW-0133">Cell shape</keyword>
<keyword id="KW-0961">Cell wall biogenesis/degradation</keyword>
<keyword id="KW-0963">Cytoplasm</keyword>
<keyword id="KW-0436">Ligase</keyword>
<keyword id="KW-0460">Magnesium</keyword>
<keyword id="KW-0464">Manganese</keyword>
<keyword id="KW-0479">Metal-binding</keyword>
<keyword id="KW-0547">Nucleotide-binding</keyword>
<keyword id="KW-0573">Peptidoglycan synthesis</keyword>
<keyword id="KW-1185">Reference proteome</keyword>
<feature type="chain" id="PRO_0000177911" description="D-alanine--D-alanine ligase">
    <location>
        <begin position="1"/>
        <end position="304"/>
    </location>
</feature>
<feature type="domain" description="ATP-grasp" evidence="2">
    <location>
        <begin position="103"/>
        <end position="301"/>
    </location>
</feature>
<feature type="binding site" evidence="2">
    <location>
        <begin position="132"/>
        <end position="187"/>
    </location>
    <ligand>
        <name>ATP</name>
        <dbReference type="ChEBI" id="CHEBI:30616"/>
    </ligand>
</feature>
<feature type="binding site" evidence="2">
    <location>
        <position position="254"/>
    </location>
    <ligand>
        <name>Mg(2+)</name>
        <dbReference type="ChEBI" id="CHEBI:18420"/>
        <label>1</label>
    </ligand>
</feature>
<feature type="binding site" evidence="2">
    <location>
        <position position="268"/>
    </location>
    <ligand>
        <name>Mg(2+)</name>
        <dbReference type="ChEBI" id="CHEBI:18420"/>
        <label>1</label>
    </ligand>
</feature>
<feature type="binding site" evidence="2">
    <location>
        <position position="268"/>
    </location>
    <ligand>
        <name>Mg(2+)</name>
        <dbReference type="ChEBI" id="CHEBI:18420"/>
        <label>2</label>
    </ligand>
</feature>
<feature type="binding site" evidence="2">
    <location>
        <position position="270"/>
    </location>
    <ligand>
        <name>Mg(2+)</name>
        <dbReference type="ChEBI" id="CHEBI:18420"/>
        <label>2</label>
    </ligand>
</feature>
<accession>Q87AG1</accession>
<comment type="function">
    <text evidence="2">Cell wall formation.</text>
</comment>
<comment type="catalytic activity">
    <reaction evidence="2">
        <text>2 D-alanine + ATP = D-alanyl-D-alanine + ADP + phosphate + H(+)</text>
        <dbReference type="Rhea" id="RHEA:11224"/>
        <dbReference type="ChEBI" id="CHEBI:15378"/>
        <dbReference type="ChEBI" id="CHEBI:30616"/>
        <dbReference type="ChEBI" id="CHEBI:43474"/>
        <dbReference type="ChEBI" id="CHEBI:57416"/>
        <dbReference type="ChEBI" id="CHEBI:57822"/>
        <dbReference type="ChEBI" id="CHEBI:456216"/>
        <dbReference type="EC" id="6.3.2.4"/>
    </reaction>
</comment>
<comment type="cofactor">
    <cofactor evidence="1">
        <name>Mg(2+)</name>
        <dbReference type="ChEBI" id="CHEBI:18420"/>
    </cofactor>
    <cofactor evidence="1">
        <name>Mn(2+)</name>
        <dbReference type="ChEBI" id="CHEBI:29035"/>
    </cofactor>
    <text evidence="1">Binds 2 magnesium or manganese ions per subunit.</text>
</comment>
<comment type="pathway">
    <text evidence="2">Cell wall biogenesis; peptidoglycan biosynthesis.</text>
</comment>
<comment type="subcellular location">
    <subcellularLocation>
        <location evidence="2">Cytoplasm</location>
    </subcellularLocation>
</comment>
<comment type="similarity">
    <text evidence="2">Belongs to the D-alanine--D-alanine ligase family.</text>
</comment>